<organism>
    <name type="scientific">Solanum bulbocastanum</name>
    <name type="common">Wild potato</name>
    <dbReference type="NCBI Taxonomy" id="147425"/>
    <lineage>
        <taxon>Eukaryota</taxon>
        <taxon>Viridiplantae</taxon>
        <taxon>Streptophyta</taxon>
        <taxon>Embryophyta</taxon>
        <taxon>Tracheophyta</taxon>
        <taxon>Spermatophyta</taxon>
        <taxon>Magnoliopsida</taxon>
        <taxon>eudicotyledons</taxon>
        <taxon>Gunneridae</taxon>
        <taxon>Pentapetalae</taxon>
        <taxon>asterids</taxon>
        <taxon>lamiids</taxon>
        <taxon>Solanales</taxon>
        <taxon>Solanaceae</taxon>
        <taxon>Solanoideae</taxon>
        <taxon>Solaneae</taxon>
        <taxon>Solanum</taxon>
    </lineage>
</organism>
<proteinExistence type="inferred from homology"/>
<accession>Q2MIK7</accession>
<keyword id="KW-0007">Acetylation</keyword>
<keyword id="KW-0106">Calcium</keyword>
<keyword id="KW-0148">Chlorophyll</keyword>
<keyword id="KW-0150">Chloroplast</keyword>
<keyword id="KW-0157">Chromophore</keyword>
<keyword id="KW-0249">Electron transport</keyword>
<keyword id="KW-0359">Herbicide resistance</keyword>
<keyword id="KW-0408">Iron</keyword>
<keyword id="KW-0460">Magnesium</keyword>
<keyword id="KW-0464">Manganese</keyword>
<keyword id="KW-0472">Membrane</keyword>
<keyword id="KW-0479">Metal-binding</keyword>
<keyword id="KW-0560">Oxidoreductase</keyword>
<keyword id="KW-0597">Phosphoprotein</keyword>
<keyword id="KW-0602">Photosynthesis</keyword>
<keyword id="KW-0604">Photosystem II</keyword>
<keyword id="KW-0934">Plastid</keyword>
<keyword id="KW-0793">Thylakoid</keyword>
<keyword id="KW-0812">Transmembrane</keyword>
<keyword id="KW-1133">Transmembrane helix</keyword>
<keyword id="KW-0813">Transport</keyword>
<evidence type="ECO:0000255" key="1">
    <source>
        <dbReference type="HAMAP-Rule" id="MF_01379"/>
    </source>
</evidence>
<reference key="1">
    <citation type="journal article" date="2006" name="Theor. Appl. Genet.">
        <title>Complete chloroplast genome sequences of Solanum bulbocastanum, Solanum lycopersicum and comparative analyses with other Solanaceae genomes.</title>
        <authorList>
            <person name="Daniell H."/>
            <person name="Lee S.-B."/>
            <person name="Grevich J."/>
            <person name="Saski C."/>
            <person name="Quesada-Vargas T."/>
            <person name="Guda C."/>
            <person name="Tomkins J."/>
            <person name="Jansen R.K."/>
        </authorList>
    </citation>
    <scope>NUCLEOTIDE SEQUENCE [LARGE SCALE GENOMIC DNA]</scope>
    <source>
        <strain>cv. PT29</strain>
    </source>
</reference>
<feature type="initiator methionine" description="Removed" evidence="1">
    <location>
        <position position="1"/>
    </location>
</feature>
<feature type="chain" id="PRO_0000340068" description="Photosystem II protein D1" evidence="1">
    <location>
        <begin position="2"/>
        <end position="344"/>
    </location>
</feature>
<feature type="propeptide" id="PRO_0000340069" evidence="1">
    <location>
        <begin position="345"/>
        <end position="353"/>
    </location>
</feature>
<feature type="transmembrane region" description="Helical" evidence="1">
    <location>
        <begin position="29"/>
        <end position="46"/>
    </location>
</feature>
<feature type="transmembrane region" description="Helical" evidence="1">
    <location>
        <begin position="118"/>
        <end position="133"/>
    </location>
</feature>
<feature type="transmembrane region" description="Helical" evidence="1">
    <location>
        <begin position="142"/>
        <end position="156"/>
    </location>
</feature>
<feature type="transmembrane region" description="Helical" evidence="1">
    <location>
        <begin position="197"/>
        <end position="218"/>
    </location>
</feature>
<feature type="transmembrane region" description="Helical" evidence="1">
    <location>
        <begin position="274"/>
        <end position="288"/>
    </location>
</feature>
<feature type="binding site" description="axial binding residue" evidence="1">
    <location>
        <position position="118"/>
    </location>
    <ligand>
        <name>chlorophyll a</name>
        <dbReference type="ChEBI" id="CHEBI:58416"/>
        <label>ChlzD1</label>
    </ligand>
    <ligandPart>
        <name>Mg</name>
        <dbReference type="ChEBI" id="CHEBI:25107"/>
    </ligandPart>
</feature>
<feature type="binding site" evidence="1">
    <location>
        <position position="126"/>
    </location>
    <ligand>
        <name>pheophytin a</name>
        <dbReference type="ChEBI" id="CHEBI:136840"/>
        <label>D1</label>
    </ligand>
</feature>
<feature type="binding site" evidence="1">
    <location>
        <position position="170"/>
    </location>
    <ligand>
        <name>[CaMn4O5] cluster</name>
        <dbReference type="ChEBI" id="CHEBI:189552"/>
    </ligand>
</feature>
<feature type="binding site" evidence="1">
    <location>
        <position position="189"/>
    </location>
    <ligand>
        <name>[CaMn4O5] cluster</name>
        <dbReference type="ChEBI" id="CHEBI:189552"/>
    </ligand>
</feature>
<feature type="binding site" description="axial binding residue" evidence="1">
    <location>
        <position position="198"/>
    </location>
    <ligand>
        <name>chlorophyll a</name>
        <dbReference type="ChEBI" id="CHEBI:58416"/>
        <label>PD1</label>
    </ligand>
    <ligandPart>
        <name>Mg</name>
        <dbReference type="ChEBI" id="CHEBI:25107"/>
    </ligandPart>
</feature>
<feature type="binding site" evidence="1">
    <location>
        <position position="215"/>
    </location>
    <ligand>
        <name>a quinone</name>
        <dbReference type="ChEBI" id="CHEBI:132124"/>
        <label>B</label>
    </ligand>
</feature>
<feature type="binding site" evidence="1">
    <location>
        <position position="215"/>
    </location>
    <ligand>
        <name>Fe cation</name>
        <dbReference type="ChEBI" id="CHEBI:24875"/>
        <note>ligand shared with heterodimeric partner</note>
    </ligand>
</feature>
<feature type="binding site" evidence="1">
    <location>
        <begin position="264"/>
        <end position="265"/>
    </location>
    <ligand>
        <name>a quinone</name>
        <dbReference type="ChEBI" id="CHEBI:132124"/>
        <label>B</label>
    </ligand>
</feature>
<feature type="binding site" evidence="1">
    <location>
        <position position="272"/>
    </location>
    <ligand>
        <name>Fe cation</name>
        <dbReference type="ChEBI" id="CHEBI:24875"/>
        <note>ligand shared with heterodimeric partner</note>
    </ligand>
</feature>
<feature type="binding site" evidence="1">
    <location>
        <position position="332"/>
    </location>
    <ligand>
        <name>[CaMn4O5] cluster</name>
        <dbReference type="ChEBI" id="CHEBI:189552"/>
    </ligand>
</feature>
<feature type="binding site" evidence="1">
    <location>
        <position position="333"/>
    </location>
    <ligand>
        <name>[CaMn4O5] cluster</name>
        <dbReference type="ChEBI" id="CHEBI:189552"/>
    </ligand>
</feature>
<feature type="binding site" evidence="1">
    <location>
        <position position="342"/>
    </location>
    <ligand>
        <name>[CaMn4O5] cluster</name>
        <dbReference type="ChEBI" id="CHEBI:189552"/>
    </ligand>
</feature>
<feature type="binding site" evidence="1">
    <location>
        <position position="344"/>
    </location>
    <ligand>
        <name>[CaMn4O5] cluster</name>
        <dbReference type="ChEBI" id="CHEBI:189552"/>
    </ligand>
</feature>
<feature type="site" description="Tyrosine radical intermediate" evidence="1">
    <location>
        <position position="161"/>
    </location>
</feature>
<feature type="site" description="Stabilizes free radical intermediate" evidence="1">
    <location>
        <position position="190"/>
    </location>
</feature>
<feature type="site" description="Cleavage; by CTPA" evidence="1">
    <location>
        <begin position="344"/>
        <end position="345"/>
    </location>
</feature>
<feature type="modified residue" description="N-acetylthreonine" evidence="1">
    <location>
        <position position="2"/>
    </location>
</feature>
<feature type="modified residue" description="Phosphothreonine" evidence="1">
    <location>
        <position position="2"/>
    </location>
</feature>
<protein>
    <recommendedName>
        <fullName evidence="1">Photosystem II protein D1</fullName>
        <shortName evidence="1">PSII D1 protein</shortName>
        <ecNumber evidence="1">1.10.3.9</ecNumber>
    </recommendedName>
    <alternativeName>
        <fullName evidence="1">Photosystem II Q(B) protein</fullName>
    </alternativeName>
</protein>
<dbReference type="EC" id="1.10.3.9" evidence="1"/>
<dbReference type="EMBL" id="DQ347958">
    <property type="protein sequence ID" value="ABC56193.1"/>
    <property type="molecule type" value="Genomic_DNA"/>
</dbReference>
<dbReference type="RefSeq" id="YP_538828.1">
    <property type="nucleotide sequence ID" value="NC_007943.1"/>
</dbReference>
<dbReference type="SMR" id="Q2MIK7"/>
<dbReference type="GeneID" id="3989449"/>
<dbReference type="GO" id="GO:0009535">
    <property type="term" value="C:chloroplast thylakoid membrane"/>
    <property type="evidence" value="ECO:0007669"/>
    <property type="project" value="UniProtKB-SubCell"/>
</dbReference>
<dbReference type="GO" id="GO:0009523">
    <property type="term" value="C:photosystem II"/>
    <property type="evidence" value="ECO:0007669"/>
    <property type="project" value="UniProtKB-KW"/>
</dbReference>
<dbReference type="GO" id="GO:0016168">
    <property type="term" value="F:chlorophyll binding"/>
    <property type="evidence" value="ECO:0007669"/>
    <property type="project" value="UniProtKB-UniRule"/>
</dbReference>
<dbReference type="GO" id="GO:0045156">
    <property type="term" value="F:electron transporter, transferring electrons within the cyclic electron transport pathway of photosynthesis activity"/>
    <property type="evidence" value="ECO:0007669"/>
    <property type="project" value="InterPro"/>
</dbReference>
<dbReference type="GO" id="GO:0005506">
    <property type="term" value="F:iron ion binding"/>
    <property type="evidence" value="ECO:0007669"/>
    <property type="project" value="UniProtKB-UniRule"/>
</dbReference>
<dbReference type="GO" id="GO:0016682">
    <property type="term" value="F:oxidoreductase activity, acting on diphenols and related substances as donors, oxygen as acceptor"/>
    <property type="evidence" value="ECO:0007669"/>
    <property type="project" value="UniProtKB-UniRule"/>
</dbReference>
<dbReference type="GO" id="GO:0010242">
    <property type="term" value="F:oxygen evolving activity"/>
    <property type="evidence" value="ECO:0007669"/>
    <property type="project" value="UniProtKB-EC"/>
</dbReference>
<dbReference type="GO" id="GO:0009772">
    <property type="term" value="P:photosynthetic electron transport in photosystem II"/>
    <property type="evidence" value="ECO:0007669"/>
    <property type="project" value="InterPro"/>
</dbReference>
<dbReference type="GO" id="GO:0009635">
    <property type="term" value="P:response to herbicide"/>
    <property type="evidence" value="ECO:0007669"/>
    <property type="project" value="UniProtKB-KW"/>
</dbReference>
<dbReference type="CDD" id="cd09289">
    <property type="entry name" value="Photosystem-II_D1"/>
    <property type="match status" value="1"/>
</dbReference>
<dbReference type="FunFam" id="1.20.85.10:FF:000002">
    <property type="entry name" value="Photosystem II protein D1"/>
    <property type="match status" value="1"/>
</dbReference>
<dbReference type="Gene3D" id="1.20.85.10">
    <property type="entry name" value="Photosystem II protein D1-like"/>
    <property type="match status" value="1"/>
</dbReference>
<dbReference type="HAMAP" id="MF_01379">
    <property type="entry name" value="PSII_PsbA_D1"/>
    <property type="match status" value="1"/>
</dbReference>
<dbReference type="InterPro" id="IPR055266">
    <property type="entry name" value="D1/D2"/>
</dbReference>
<dbReference type="InterPro" id="IPR036854">
    <property type="entry name" value="Photo_II_D1/D2_sf"/>
</dbReference>
<dbReference type="InterPro" id="IPR000484">
    <property type="entry name" value="Photo_RC_L/M"/>
</dbReference>
<dbReference type="InterPro" id="IPR055265">
    <property type="entry name" value="Photo_RC_L/M_CS"/>
</dbReference>
<dbReference type="InterPro" id="IPR005867">
    <property type="entry name" value="PSII_D1"/>
</dbReference>
<dbReference type="NCBIfam" id="TIGR01151">
    <property type="entry name" value="psbA"/>
    <property type="match status" value="1"/>
</dbReference>
<dbReference type="PANTHER" id="PTHR33149:SF12">
    <property type="entry name" value="PHOTOSYSTEM II D2 PROTEIN"/>
    <property type="match status" value="1"/>
</dbReference>
<dbReference type="PANTHER" id="PTHR33149">
    <property type="entry name" value="PHOTOSYSTEM II PROTEIN D1"/>
    <property type="match status" value="1"/>
</dbReference>
<dbReference type="Pfam" id="PF00124">
    <property type="entry name" value="Photo_RC"/>
    <property type="match status" value="1"/>
</dbReference>
<dbReference type="PRINTS" id="PR00256">
    <property type="entry name" value="REACTNCENTRE"/>
</dbReference>
<dbReference type="SUPFAM" id="SSF81483">
    <property type="entry name" value="Bacterial photosystem II reaction centre, L and M subunits"/>
    <property type="match status" value="1"/>
</dbReference>
<dbReference type="PROSITE" id="PS00244">
    <property type="entry name" value="REACTION_CENTER"/>
    <property type="match status" value="1"/>
</dbReference>
<geneLocation type="chloroplast"/>
<comment type="function">
    <text evidence="1">Photosystem II (PSII) is a light-driven water:plastoquinone oxidoreductase that uses light energy to abstract electrons from H(2)O, generating O(2) and a proton gradient subsequently used for ATP formation. It consists of a core antenna complex that captures photons, and an electron transfer chain that converts photonic excitation into a charge separation. The D1/D2 (PsbA/PsbD) reaction center heterodimer binds P680, the primary electron donor of PSII as well as several subsequent electron acceptors.</text>
</comment>
<comment type="catalytic activity">
    <reaction evidence="1">
        <text>2 a plastoquinone + 4 hnu + 2 H2O = 2 a plastoquinol + O2</text>
        <dbReference type="Rhea" id="RHEA:36359"/>
        <dbReference type="Rhea" id="RHEA-COMP:9561"/>
        <dbReference type="Rhea" id="RHEA-COMP:9562"/>
        <dbReference type="ChEBI" id="CHEBI:15377"/>
        <dbReference type="ChEBI" id="CHEBI:15379"/>
        <dbReference type="ChEBI" id="CHEBI:17757"/>
        <dbReference type="ChEBI" id="CHEBI:30212"/>
        <dbReference type="ChEBI" id="CHEBI:62192"/>
        <dbReference type="EC" id="1.10.3.9"/>
    </reaction>
</comment>
<comment type="cofactor">
    <text evidence="1">The D1/D2 heterodimer binds P680, chlorophylls that are the primary electron donor of PSII, and subsequent electron acceptors. It shares a non-heme iron and each subunit binds pheophytin, quinone, additional chlorophylls, carotenoids and lipids. D1 provides most of the ligands for the Mn4-Ca-O5 cluster of the oxygen-evolving complex (OEC). There is also a Cl(-1) ion associated with D1 and D2, which is required for oxygen evolution. The PSII complex binds additional chlorophylls, carotenoids and specific lipids.</text>
</comment>
<comment type="subunit">
    <text evidence="1">PSII is composed of 1 copy each of membrane proteins PsbA, PsbB, PsbC, PsbD, PsbE, PsbF, PsbH, PsbI, PsbJ, PsbK, PsbL, PsbM, PsbT, PsbX, PsbY, PsbZ, Psb30/Ycf12, at least 3 peripheral proteins of the oxygen-evolving complex and a large number of cofactors. It forms dimeric complexes.</text>
</comment>
<comment type="subcellular location">
    <subcellularLocation>
        <location evidence="1">Plastid</location>
        <location evidence="1">Chloroplast thylakoid membrane</location>
        <topology evidence="1">Multi-pass membrane protein</topology>
    </subcellularLocation>
</comment>
<comment type="PTM">
    <text evidence="1">Tyr-161 forms a radical intermediate that is referred to as redox-active TyrZ, YZ or Y-Z.</text>
</comment>
<comment type="PTM">
    <text evidence="1">C-terminally processed by CTPA; processing is essential to allow assembly of the oxygen-evolving complex and thus photosynthetic growth.</text>
</comment>
<comment type="miscellaneous">
    <text evidence="1">2 of the reaction center chlorophylls (ChlD1 and ChlD2) are entirely coordinated by water.</text>
</comment>
<comment type="miscellaneous">
    <text evidence="1">Herbicides such as atrazine, BNT, diuron or ioxynil bind in the Q(B) binding site and block subsequent electron transfer.</text>
</comment>
<comment type="similarity">
    <text evidence="1">Belongs to the reaction center PufL/M/PsbA/D family.</text>
</comment>
<name>PSBA_SOLBU</name>
<gene>
    <name evidence="1" type="primary">psbA</name>
</gene>
<sequence length="353" mass="38951">MTAILERRESESLWGRFCNWITSTENRLYIGWFGVLMIPTLLTATSVFIIAFIAAPPVDIDGIREPVSGSLLYGNNIISGAIIPTSAAIGLHFYPIWEAASVDEWLYNGGPYELIVLHFLLGVACYMGREWELSFRLGMRPWIAVAYSAPVAAATAVFLIYPIGQGSFSDGMPLGISGTFNFMIVFQAEHNILMHPFHMLGVAGVFGGSLFSAMHGSLVTSSLIRETTENESANEGYRFGQEEETYNIVAAHGYFGRLIFQYASFNNSRSLHFFLAAWPVVGIWFTALGISTMAFNLNGFNFNQSVVDSQGRVINTWADIINRANLGMEVMHERNAHNFPLDLAAIEAPSTNG</sequence>